<name>FADR_HAEIE</name>
<keyword id="KW-0010">Activator</keyword>
<keyword id="KW-0963">Cytoplasm</keyword>
<keyword id="KW-0238">DNA-binding</keyword>
<keyword id="KW-0276">Fatty acid metabolism</keyword>
<keyword id="KW-0443">Lipid metabolism</keyword>
<keyword id="KW-0678">Repressor</keyword>
<keyword id="KW-0804">Transcription</keyword>
<keyword id="KW-0805">Transcription regulation</keyword>
<sequence length="241" mass="27737">MQNNNDILKAQSPAALAEEYIVKSIWQDVFPAGSNLPSERDLADKIGVTRTTLREVLQRLARDGWLTIQHGKPTKVNNIWDAAGPNIIETLIALDMQSAPLIIDNMLSLRSKMSESYIYEAVKNSPQKSTALFAELEQLQNTAQDYTEFDYQLFRQFTVVANKPFYRLIFNSLKGVYQRIGLLFFKEKTHRELTKQFYLEMQQICLEGNADAVVDCIRKHNLRSSTYWKAILERLPQNLSD</sequence>
<organism>
    <name type="scientific">Haemophilus influenzae (strain PittEE)</name>
    <dbReference type="NCBI Taxonomy" id="374930"/>
    <lineage>
        <taxon>Bacteria</taxon>
        <taxon>Pseudomonadati</taxon>
        <taxon>Pseudomonadota</taxon>
        <taxon>Gammaproteobacteria</taxon>
        <taxon>Pasteurellales</taxon>
        <taxon>Pasteurellaceae</taxon>
        <taxon>Haemophilus</taxon>
    </lineage>
</organism>
<comment type="function">
    <text evidence="1">Multifunctional regulator of fatty acid metabolism.</text>
</comment>
<comment type="subunit">
    <text evidence="1">Homodimer.</text>
</comment>
<comment type="subcellular location">
    <subcellularLocation>
        <location evidence="1">Cytoplasm</location>
    </subcellularLocation>
</comment>
<proteinExistence type="inferred from homology"/>
<protein>
    <recommendedName>
        <fullName evidence="1">Fatty acid metabolism regulator protein</fullName>
    </recommendedName>
</protein>
<reference key="1">
    <citation type="journal article" date="2007" name="Genome Biol.">
        <title>Characterization and modeling of the Haemophilus influenzae core and supragenomes based on the complete genomic sequences of Rd and 12 clinical nontypeable strains.</title>
        <authorList>
            <person name="Hogg J.S."/>
            <person name="Hu F.Z."/>
            <person name="Janto B."/>
            <person name="Boissy R."/>
            <person name="Hayes J."/>
            <person name="Keefe R."/>
            <person name="Post J.C."/>
            <person name="Ehrlich G.D."/>
        </authorList>
    </citation>
    <scope>NUCLEOTIDE SEQUENCE [LARGE SCALE GENOMIC DNA]</scope>
    <source>
        <strain>PittEE</strain>
    </source>
</reference>
<evidence type="ECO:0000255" key="1">
    <source>
        <dbReference type="HAMAP-Rule" id="MF_00696"/>
    </source>
</evidence>
<dbReference type="EMBL" id="CP000671">
    <property type="protein sequence ID" value="ABQ97663.1"/>
    <property type="molecule type" value="Genomic_DNA"/>
</dbReference>
<dbReference type="SMR" id="A5UA62"/>
<dbReference type="KEGG" id="hip:CGSHiEE_00865"/>
<dbReference type="HOGENOM" id="CLU_017584_9_4_6"/>
<dbReference type="GO" id="GO:0005737">
    <property type="term" value="C:cytoplasm"/>
    <property type="evidence" value="ECO:0007669"/>
    <property type="project" value="UniProtKB-SubCell"/>
</dbReference>
<dbReference type="GO" id="GO:0003677">
    <property type="term" value="F:DNA binding"/>
    <property type="evidence" value="ECO:0007669"/>
    <property type="project" value="UniProtKB-KW"/>
</dbReference>
<dbReference type="GO" id="GO:0003700">
    <property type="term" value="F:DNA-binding transcription factor activity"/>
    <property type="evidence" value="ECO:0007669"/>
    <property type="project" value="UniProtKB-UniRule"/>
</dbReference>
<dbReference type="GO" id="GO:0000062">
    <property type="term" value="F:fatty-acyl-CoA binding"/>
    <property type="evidence" value="ECO:0007669"/>
    <property type="project" value="InterPro"/>
</dbReference>
<dbReference type="GO" id="GO:0006631">
    <property type="term" value="P:fatty acid metabolic process"/>
    <property type="evidence" value="ECO:0007669"/>
    <property type="project" value="UniProtKB-KW"/>
</dbReference>
<dbReference type="GO" id="GO:0019217">
    <property type="term" value="P:regulation of fatty acid metabolic process"/>
    <property type="evidence" value="ECO:0007669"/>
    <property type="project" value="UniProtKB-UniRule"/>
</dbReference>
<dbReference type="CDD" id="cd07377">
    <property type="entry name" value="WHTH_GntR"/>
    <property type="match status" value="1"/>
</dbReference>
<dbReference type="Gene3D" id="1.20.120.530">
    <property type="entry name" value="GntR ligand-binding domain-like"/>
    <property type="match status" value="1"/>
</dbReference>
<dbReference type="Gene3D" id="1.10.10.10">
    <property type="entry name" value="Winged helix-like DNA-binding domain superfamily/Winged helix DNA-binding domain"/>
    <property type="match status" value="1"/>
</dbReference>
<dbReference type="HAMAP" id="MF_00696">
    <property type="entry name" value="HTH_FadR"/>
    <property type="match status" value="1"/>
</dbReference>
<dbReference type="InterPro" id="IPR014178">
    <property type="entry name" value="FA-response_TF_FadR"/>
</dbReference>
<dbReference type="InterPro" id="IPR028374">
    <property type="entry name" value="FadR_C"/>
</dbReference>
<dbReference type="InterPro" id="IPR008920">
    <property type="entry name" value="TF_FadR/GntR_C"/>
</dbReference>
<dbReference type="InterPro" id="IPR000524">
    <property type="entry name" value="Tscrpt_reg_HTH_GntR"/>
</dbReference>
<dbReference type="InterPro" id="IPR036388">
    <property type="entry name" value="WH-like_DNA-bd_sf"/>
</dbReference>
<dbReference type="InterPro" id="IPR036390">
    <property type="entry name" value="WH_DNA-bd_sf"/>
</dbReference>
<dbReference type="NCBIfam" id="TIGR02812">
    <property type="entry name" value="fadR_gamma"/>
    <property type="match status" value="1"/>
</dbReference>
<dbReference type="NCBIfam" id="NF003444">
    <property type="entry name" value="PRK04984.1"/>
    <property type="match status" value="1"/>
</dbReference>
<dbReference type="PANTHER" id="PTHR43537:SF52">
    <property type="entry name" value="FATTY ACID METABOLISM REGULATOR PROTEIN"/>
    <property type="match status" value="1"/>
</dbReference>
<dbReference type="PANTHER" id="PTHR43537">
    <property type="entry name" value="TRANSCRIPTIONAL REGULATOR, GNTR FAMILY"/>
    <property type="match status" value="1"/>
</dbReference>
<dbReference type="Pfam" id="PF07840">
    <property type="entry name" value="FadR_C"/>
    <property type="match status" value="1"/>
</dbReference>
<dbReference type="Pfam" id="PF00392">
    <property type="entry name" value="GntR"/>
    <property type="match status" value="1"/>
</dbReference>
<dbReference type="PRINTS" id="PR00035">
    <property type="entry name" value="HTHGNTR"/>
</dbReference>
<dbReference type="SMART" id="SM00345">
    <property type="entry name" value="HTH_GNTR"/>
    <property type="match status" value="1"/>
</dbReference>
<dbReference type="SUPFAM" id="SSF48008">
    <property type="entry name" value="GntR ligand-binding domain-like"/>
    <property type="match status" value="1"/>
</dbReference>
<dbReference type="SUPFAM" id="SSF46785">
    <property type="entry name" value="Winged helix' DNA-binding domain"/>
    <property type="match status" value="1"/>
</dbReference>
<dbReference type="PROSITE" id="PS50949">
    <property type="entry name" value="HTH_GNTR"/>
    <property type="match status" value="1"/>
</dbReference>
<gene>
    <name evidence="1" type="primary">fadR</name>
    <name type="ordered locus">CGSHiEE_00865</name>
</gene>
<feature type="chain" id="PRO_1000045461" description="Fatty acid metabolism regulator protein">
    <location>
        <begin position="1"/>
        <end position="241"/>
    </location>
</feature>
<feature type="domain" description="HTH gntR-type" evidence="1">
    <location>
        <begin position="11"/>
        <end position="79"/>
    </location>
</feature>
<feature type="DNA-binding region" description="H-T-H motif" evidence="1">
    <location>
        <begin position="39"/>
        <end position="58"/>
    </location>
</feature>
<accession>A5UA62</accession>